<organism>
    <name type="scientific">Ipomoea purpurea</name>
    <name type="common">Common morning glory</name>
    <name type="synonym">Pharbitis purpurea</name>
    <dbReference type="NCBI Taxonomy" id="4121"/>
    <lineage>
        <taxon>Eukaryota</taxon>
        <taxon>Viridiplantae</taxon>
        <taxon>Streptophyta</taxon>
        <taxon>Embryophyta</taxon>
        <taxon>Tracheophyta</taxon>
        <taxon>Spermatophyta</taxon>
        <taxon>Magnoliopsida</taxon>
        <taxon>eudicotyledons</taxon>
        <taxon>Gunneridae</taxon>
        <taxon>Pentapetalae</taxon>
        <taxon>asterids</taxon>
        <taxon>lamiids</taxon>
        <taxon>Solanales</taxon>
        <taxon>Convolvulaceae</taxon>
        <taxon>Ipomoeeae</taxon>
        <taxon>Ipomoea</taxon>
    </lineage>
</organism>
<name>RK36_IPOPU</name>
<accession>A7Y3I4</accession>
<reference key="1">
    <citation type="journal article" date="2007" name="BMC Plant Biol.">
        <title>Complete plastid genome sequences suggest strong selection for retention of photosynthetic genes in the parasitic plant genus Cuscuta.</title>
        <authorList>
            <person name="McNeal J.R."/>
            <person name="Kuehl J.V."/>
            <person name="Boore J.L."/>
            <person name="dePamphilis C.W."/>
        </authorList>
    </citation>
    <scope>NUCLEOTIDE SEQUENCE [LARGE SCALE GENOMIC DNA]</scope>
</reference>
<comment type="subcellular location">
    <subcellularLocation>
        <location>Plastid</location>
        <location>Chloroplast</location>
    </subcellularLocation>
</comment>
<comment type="similarity">
    <text evidence="1">Belongs to the bacterial ribosomal protein bL36 family.</text>
</comment>
<sequence length="37" mass="4460">MKIRASVRKICEKCRLIRRRGRIIVICSNPRHKQRQG</sequence>
<geneLocation type="chloroplast"/>
<dbReference type="EMBL" id="EU118126">
    <property type="protein sequence ID" value="ABV02382.1"/>
    <property type="molecule type" value="Genomic_DNA"/>
</dbReference>
<dbReference type="RefSeq" id="YP_001468342.1">
    <property type="nucleotide sequence ID" value="NC_009808.1"/>
</dbReference>
<dbReference type="SMR" id="A7Y3I4"/>
<dbReference type="GeneID" id="5601267"/>
<dbReference type="GO" id="GO:0009507">
    <property type="term" value="C:chloroplast"/>
    <property type="evidence" value="ECO:0007669"/>
    <property type="project" value="UniProtKB-SubCell"/>
</dbReference>
<dbReference type="GO" id="GO:1990904">
    <property type="term" value="C:ribonucleoprotein complex"/>
    <property type="evidence" value="ECO:0007669"/>
    <property type="project" value="UniProtKB-KW"/>
</dbReference>
<dbReference type="GO" id="GO:0005840">
    <property type="term" value="C:ribosome"/>
    <property type="evidence" value="ECO:0007669"/>
    <property type="project" value="UniProtKB-KW"/>
</dbReference>
<dbReference type="GO" id="GO:0003735">
    <property type="term" value="F:structural constituent of ribosome"/>
    <property type="evidence" value="ECO:0007669"/>
    <property type="project" value="InterPro"/>
</dbReference>
<dbReference type="GO" id="GO:0006412">
    <property type="term" value="P:translation"/>
    <property type="evidence" value="ECO:0007669"/>
    <property type="project" value="UniProtKB-UniRule"/>
</dbReference>
<dbReference type="HAMAP" id="MF_00251">
    <property type="entry name" value="Ribosomal_bL36"/>
    <property type="match status" value="1"/>
</dbReference>
<dbReference type="InterPro" id="IPR000473">
    <property type="entry name" value="Ribosomal_bL36"/>
</dbReference>
<dbReference type="InterPro" id="IPR035977">
    <property type="entry name" value="Ribosomal_bL36_sp"/>
</dbReference>
<dbReference type="NCBIfam" id="TIGR01022">
    <property type="entry name" value="rpmJ_bact"/>
    <property type="match status" value="1"/>
</dbReference>
<dbReference type="PANTHER" id="PTHR42888">
    <property type="entry name" value="50S RIBOSOMAL PROTEIN L36, CHLOROPLASTIC"/>
    <property type="match status" value="1"/>
</dbReference>
<dbReference type="PANTHER" id="PTHR42888:SF1">
    <property type="entry name" value="LARGE RIBOSOMAL SUBUNIT PROTEIN BL36C"/>
    <property type="match status" value="1"/>
</dbReference>
<dbReference type="Pfam" id="PF00444">
    <property type="entry name" value="Ribosomal_L36"/>
    <property type="match status" value="1"/>
</dbReference>
<dbReference type="SUPFAM" id="SSF57840">
    <property type="entry name" value="Ribosomal protein L36"/>
    <property type="match status" value="1"/>
</dbReference>
<dbReference type="PROSITE" id="PS00828">
    <property type="entry name" value="RIBOSOMAL_L36"/>
    <property type="match status" value="1"/>
</dbReference>
<gene>
    <name evidence="1" type="primary">rpl36</name>
</gene>
<keyword id="KW-0150">Chloroplast</keyword>
<keyword id="KW-0934">Plastid</keyword>
<keyword id="KW-0687">Ribonucleoprotein</keyword>
<keyword id="KW-0689">Ribosomal protein</keyword>
<evidence type="ECO:0000255" key="1">
    <source>
        <dbReference type="HAMAP-Rule" id="MF_00251"/>
    </source>
</evidence>
<evidence type="ECO:0000305" key="2"/>
<protein>
    <recommendedName>
        <fullName evidence="1">Large ribosomal subunit protein bL36c</fullName>
    </recommendedName>
    <alternativeName>
        <fullName evidence="2">50S ribosomal protein L36, chloroplastic</fullName>
    </alternativeName>
</protein>
<feature type="chain" id="PRO_0000344764" description="Large ribosomal subunit protein bL36c">
    <location>
        <begin position="1"/>
        <end position="37"/>
    </location>
</feature>
<proteinExistence type="inferred from homology"/>